<organism>
    <name type="scientific">Mycoplasma genitalium (strain ATCC 33530 / DSM 19775 / NCTC 10195 / G37)</name>
    <name type="common">Mycoplasmoides genitalium</name>
    <dbReference type="NCBI Taxonomy" id="243273"/>
    <lineage>
        <taxon>Bacteria</taxon>
        <taxon>Bacillati</taxon>
        <taxon>Mycoplasmatota</taxon>
        <taxon>Mycoplasmoidales</taxon>
        <taxon>Mycoplasmoidaceae</taxon>
        <taxon>Mycoplasmoides</taxon>
    </lineage>
</organism>
<name>RS21_MYCGE</name>
<comment type="similarity">
    <text evidence="1">Belongs to the bacterial ribosomal protein bS21 family.</text>
</comment>
<sequence length="62" mass="7638">MPKIEVKNDDLELALKKFKRISLEVRRLAQRHEYHLRKGMRLREKQKIAQKKRRKFRSLASH</sequence>
<evidence type="ECO:0000305" key="1"/>
<proteinExistence type="inferred from homology"/>
<protein>
    <recommendedName>
        <fullName evidence="1">Small ribosomal subunit protein bS21</fullName>
    </recommendedName>
    <alternativeName>
        <fullName>30S ribosomal protein S21</fullName>
    </alternativeName>
</protein>
<gene>
    <name type="primary">rpsU</name>
    <name type="ordered locus">MG210.2</name>
    <name type="ORF">MG_481</name>
</gene>
<feature type="chain" id="PRO_0000178352" description="Small ribosomal subunit protein bS21">
    <location>
        <begin position="1"/>
        <end position="62"/>
    </location>
</feature>
<dbReference type="EMBL" id="L43967">
    <property type="protein sequence ID" value="ABC59631.1"/>
    <property type="molecule type" value="Genomic_DNA"/>
</dbReference>
<dbReference type="RefSeq" id="WP_009885749.1">
    <property type="nucleotide sequence ID" value="NC_000908.2"/>
</dbReference>
<dbReference type="SMR" id="P57085"/>
<dbReference type="STRING" id="243273.MG_481"/>
<dbReference type="GeneID" id="88282344"/>
<dbReference type="KEGG" id="mge:MG_481"/>
<dbReference type="eggNOG" id="ENOG5030N1W">
    <property type="taxonomic scope" value="Bacteria"/>
</dbReference>
<dbReference type="HOGENOM" id="CLU_207223_0_0_14"/>
<dbReference type="InParanoid" id="P57085"/>
<dbReference type="OrthoDB" id="404044at2"/>
<dbReference type="BioCyc" id="MGEN243273:G1GJ2-245-MONOMER"/>
<dbReference type="Proteomes" id="UP000000807">
    <property type="component" value="Chromosome"/>
</dbReference>
<dbReference type="GO" id="GO:1990904">
    <property type="term" value="C:ribonucleoprotein complex"/>
    <property type="evidence" value="ECO:0007669"/>
    <property type="project" value="UniProtKB-KW"/>
</dbReference>
<dbReference type="GO" id="GO:0005840">
    <property type="term" value="C:ribosome"/>
    <property type="evidence" value="ECO:0007669"/>
    <property type="project" value="UniProtKB-KW"/>
</dbReference>
<dbReference type="GO" id="GO:0003735">
    <property type="term" value="F:structural constituent of ribosome"/>
    <property type="evidence" value="ECO:0007669"/>
    <property type="project" value="InterPro"/>
</dbReference>
<dbReference type="GO" id="GO:0006412">
    <property type="term" value="P:translation"/>
    <property type="evidence" value="ECO:0007669"/>
    <property type="project" value="UniProtKB-UniRule"/>
</dbReference>
<dbReference type="HAMAP" id="MF_00358">
    <property type="entry name" value="Ribosomal_bS21"/>
    <property type="match status" value="1"/>
</dbReference>
<dbReference type="InterPro" id="IPR001911">
    <property type="entry name" value="Ribosomal_bS21"/>
</dbReference>
<dbReference type="NCBIfam" id="TIGR00030">
    <property type="entry name" value="S21p"/>
    <property type="match status" value="1"/>
</dbReference>
<keyword id="KW-1185">Reference proteome</keyword>
<keyword id="KW-0687">Ribonucleoprotein</keyword>
<keyword id="KW-0689">Ribosomal protein</keyword>
<accession>P57085</accession>
<accession>Q2MHS9</accession>
<reference key="1">
    <citation type="journal article" date="1995" name="Science">
        <title>The minimal gene complement of Mycoplasma genitalium.</title>
        <authorList>
            <person name="Fraser C.M."/>
            <person name="Gocayne J.D."/>
            <person name="White O."/>
            <person name="Adams M.D."/>
            <person name="Clayton R.A."/>
            <person name="Fleischmann R.D."/>
            <person name="Bult C.J."/>
            <person name="Kerlavage A.R."/>
            <person name="Sutton G.G."/>
            <person name="Kelley J.M."/>
            <person name="Fritchman J.L."/>
            <person name="Weidman J.F."/>
            <person name="Small K.V."/>
            <person name="Sandusky M."/>
            <person name="Fuhrmann J.L."/>
            <person name="Nguyen D.T."/>
            <person name="Utterback T.R."/>
            <person name="Saudek D.M."/>
            <person name="Phillips C.A."/>
            <person name="Merrick J.M."/>
            <person name="Tomb J.-F."/>
            <person name="Dougherty B.A."/>
            <person name="Bott K.F."/>
            <person name="Hu P.-C."/>
            <person name="Lucier T.S."/>
            <person name="Peterson S.N."/>
            <person name="Smith H.O."/>
            <person name="Hutchison C.A. III"/>
            <person name="Venter J.C."/>
        </authorList>
    </citation>
    <scope>NUCLEOTIDE SEQUENCE [LARGE SCALE GENOMIC DNA]</scope>
    <source>
        <strain>ATCC 33530 / DSM 19775 / NCTC 10195 / G37</strain>
    </source>
</reference>
<reference key="2">
    <citation type="submission" date="2005-09" db="EMBL/GenBank/DDBJ databases">
        <authorList>
            <person name="Fraser C.M."/>
            <person name="Gocayne J.D."/>
            <person name="White O."/>
            <person name="Adams M.D."/>
            <person name="Clayton R.A."/>
            <person name="Fleischmann R.D."/>
            <person name="Bult C.J."/>
            <person name="Kerlavage A.R."/>
            <person name="Sutton G.G."/>
            <person name="Kelley J.M."/>
            <person name="Fritchman J.L."/>
            <person name="Weidman J.F."/>
            <person name="Small K.V."/>
            <person name="Sandusky M."/>
            <person name="Fuhrmann J.L."/>
            <person name="Nguyen D.T."/>
            <person name="Utterback T.R."/>
            <person name="Saudek D.M."/>
            <person name="Phillips C.A."/>
            <person name="Merrick J.M."/>
            <person name="Tomb J.-F."/>
            <person name="Dougherty B.A."/>
            <person name="Bott K.F."/>
            <person name="Hu P.-C."/>
            <person name="Lucier T.S."/>
            <person name="Peterson S.N."/>
            <person name="Smith H.O."/>
            <person name="Hutchison C.A. III"/>
            <person name="Venter J.C."/>
        </authorList>
    </citation>
    <scope>IDENTIFICATION</scope>
</reference>